<evidence type="ECO:0000255" key="1">
    <source>
        <dbReference type="HAMAP-Rule" id="MF_01396"/>
    </source>
</evidence>
<keyword id="KW-0066">ATP synthesis</keyword>
<keyword id="KW-0997">Cell inner membrane</keyword>
<keyword id="KW-1003">Cell membrane</keyword>
<keyword id="KW-0138">CF(0)</keyword>
<keyword id="KW-0375">Hydrogen ion transport</keyword>
<keyword id="KW-0406">Ion transport</keyword>
<keyword id="KW-0446">Lipid-binding</keyword>
<keyword id="KW-0472">Membrane</keyword>
<keyword id="KW-1185">Reference proteome</keyword>
<keyword id="KW-0812">Transmembrane</keyword>
<keyword id="KW-1133">Transmembrane helix</keyword>
<keyword id="KW-0813">Transport</keyword>
<protein>
    <recommendedName>
        <fullName evidence="1">ATP synthase subunit c</fullName>
    </recommendedName>
    <alternativeName>
        <fullName evidence="1">ATP synthase F(0) sector subunit c</fullName>
    </alternativeName>
    <alternativeName>
        <fullName evidence="1">F-type ATPase subunit c</fullName>
        <shortName evidence="1">F-ATPase subunit c</shortName>
    </alternativeName>
    <alternativeName>
        <fullName evidence="1">Lipid-binding protein</fullName>
    </alternativeName>
</protein>
<organism>
    <name type="scientific">Shigella dysenteriae serotype 1 (strain Sd197)</name>
    <dbReference type="NCBI Taxonomy" id="300267"/>
    <lineage>
        <taxon>Bacteria</taxon>
        <taxon>Pseudomonadati</taxon>
        <taxon>Pseudomonadota</taxon>
        <taxon>Gammaproteobacteria</taxon>
        <taxon>Enterobacterales</taxon>
        <taxon>Enterobacteriaceae</taxon>
        <taxon>Shigella</taxon>
    </lineage>
</organism>
<dbReference type="EMBL" id="CP000034">
    <property type="protein sequence ID" value="ABB63929.1"/>
    <property type="molecule type" value="Genomic_DNA"/>
</dbReference>
<dbReference type="RefSeq" id="WP_000429386.1">
    <property type="nucleotide sequence ID" value="NC_007606.1"/>
</dbReference>
<dbReference type="RefSeq" id="YP_405420.1">
    <property type="nucleotide sequence ID" value="NC_007606.1"/>
</dbReference>
<dbReference type="SMR" id="Q329S6"/>
<dbReference type="STRING" id="300267.SDY_4011"/>
<dbReference type="EnsemblBacteria" id="ABB63929">
    <property type="protein sequence ID" value="ABB63929"/>
    <property type="gene ID" value="SDY_4011"/>
</dbReference>
<dbReference type="GeneID" id="98390858"/>
<dbReference type="KEGG" id="sdy:SDY_4011"/>
<dbReference type="PATRIC" id="fig|300267.13.peg.4724"/>
<dbReference type="HOGENOM" id="CLU_148047_1_0_6"/>
<dbReference type="PRO" id="PR:Q329S6"/>
<dbReference type="Proteomes" id="UP000002716">
    <property type="component" value="Chromosome"/>
</dbReference>
<dbReference type="GO" id="GO:0005886">
    <property type="term" value="C:plasma membrane"/>
    <property type="evidence" value="ECO:0007669"/>
    <property type="project" value="UniProtKB-SubCell"/>
</dbReference>
<dbReference type="GO" id="GO:0045259">
    <property type="term" value="C:proton-transporting ATP synthase complex"/>
    <property type="evidence" value="ECO:0007669"/>
    <property type="project" value="UniProtKB-KW"/>
</dbReference>
<dbReference type="GO" id="GO:0033177">
    <property type="term" value="C:proton-transporting two-sector ATPase complex, proton-transporting domain"/>
    <property type="evidence" value="ECO:0007669"/>
    <property type="project" value="InterPro"/>
</dbReference>
<dbReference type="GO" id="GO:0008289">
    <property type="term" value="F:lipid binding"/>
    <property type="evidence" value="ECO:0007669"/>
    <property type="project" value="UniProtKB-KW"/>
</dbReference>
<dbReference type="GO" id="GO:0046933">
    <property type="term" value="F:proton-transporting ATP synthase activity, rotational mechanism"/>
    <property type="evidence" value="ECO:0007669"/>
    <property type="project" value="UniProtKB-UniRule"/>
</dbReference>
<dbReference type="CDD" id="cd18185">
    <property type="entry name" value="ATP-synt_Fo_c_ATPE"/>
    <property type="match status" value="1"/>
</dbReference>
<dbReference type="FunFam" id="1.20.20.10:FF:000002">
    <property type="entry name" value="ATP synthase subunit c"/>
    <property type="match status" value="1"/>
</dbReference>
<dbReference type="Gene3D" id="1.20.20.10">
    <property type="entry name" value="F1F0 ATP synthase subunit C"/>
    <property type="match status" value="1"/>
</dbReference>
<dbReference type="HAMAP" id="MF_01396">
    <property type="entry name" value="ATP_synth_c_bact"/>
    <property type="match status" value="1"/>
</dbReference>
<dbReference type="InterPro" id="IPR005953">
    <property type="entry name" value="ATP_synth_csu_bac/chlpt"/>
</dbReference>
<dbReference type="InterPro" id="IPR000454">
    <property type="entry name" value="ATP_synth_F0_csu"/>
</dbReference>
<dbReference type="InterPro" id="IPR020537">
    <property type="entry name" value="ATP_synth_F0_csu_DDCD_BS"/>
</dbReference>
<dbReference type="InterPro" id="IPR038662">
    <property type="entry name" value="ATP_synth_F0_csu_sf"/>
</dbReference>
<dbReference type="InterPro" id="IPR002379">
    <property type="entry name" value="ATPase_proteolipid_c-like_dom"/>
</dbReference>
<dbReference type="InterPro" id="IPR035921">
    <property type="entry name" value="F/V-ATP_Csub_sf"/>
</dbReference>
<dbReference type="NCBIfam" id="TIGR01260">
    <property type="entry name" value="ATP_synt_c"/>
    <property type="match status" value="1"/>
</dbReference>
<dbReference type="NCBIfam" id="NF005363">
    <property type="entry name" value="PRK06876.1"/>
    <property type="match status" value="1"/>
</dbReference>
<dbReference type="Pfam" id="PF00137">
    <property type="entry name" value="ATP-synt_C"/>
    <property type="match status" value="1"/>
</dbReference>
<dbReference type="PRINTS" id="PR00124">
    <property type="entry name" value="ATPASEC"/>
</dbReference>
<dbReference type="SUPFAM" id="SSF81333">
    <property type="entry name" value="F1F0 ATP synthase subunit C"/>
    <property type="match status" value="1"/>
</dbReference>
<dbReference type="PROSITE" id="PS00605">
    <property type="entry name" value="ATPASE_C"/>
    <property type="match status" value="1"/>
</dbReference>
<feature type="chain" id="PRO_1000184487" description="ATP synthase subunit c">
    <location>
        <begin position="1"/>
        <end position="79"/>
    </location>
</feature>
<feature type="transmembrane region" description="Helical" evidence="1">
    <location>
        <begin position="11"/>
        <end position="31"/>
    </location>
</feature>
<feature type="transmembrane region" description="Helical" evidence="1">
    <location>
        <begin position="53"/>
        <end position="73"/>
    </location>
</feature>
<feature type="site" description="Reversibly protonated during proton transport" evidence="1">
    <location>
        <position position="61"/>
    </location>
</feature>
<gene>
    <name evidence="1" type="primary">atpE</name>
    <name type="ordered locus">SDY_4011</name>
</gene>
<accession>Q329S6</accession>
<reference key="1">
    <citation type="journal article" date="2005" name="Nucleic Acids Res.">
        <title>Genome dynamics and diversity of Shigella species, the etiologic agents of bacillary dysentery.</title>
        <authorList>
            <person name="Yang F."/>
            <person name="Yang J."/>
            <person name="Zhang X."/>
            <person name="Chen L."/>
            <person name="Jiang Y."/>
            <person name="Yan Y."/>
            <person name="Tang X."/>
            <person name="Wang J."/>
            <person name="Xiong Z."/>
            <person name="Dong J."/>
            <person name="Xue Y."/>
            <person name="Zhu Y."/>
            <person name="Xu X."/>
            <person name="Sun L."/>
            <person name="Chen S."/>
            <person name="Nie H."/>
            <person name="Peng J."/>
            <person name="Xu J."/>
            <person name="Wang Y."/>
            <person name="Yuan Z."/>
            <person name="Wen Y."/>
            <person name="Yao Z."/>
            <person name="Shen Y."/>
            <person name="Qiang B."/>
            <person name="Hou Y."/>
            <person name="Yu J."/>
            <person name="Jin Q."/>
        </authorList>
    </citation>
    <scope>NUCLEOTIDE SEQUENCE [LARGE SCALE GENOMIC DNA]</scope>
    <source>
        <strain>Sd197</strain>
    </source>
</reference>
<sequence>MENLNMDLLYMAAAVMMGLAAIGAAIGIGILGGKFLEGAARQPDLIPLLRTQFFIVMGLVDAIPMIAVGLGLYVMFAVA</sequence>
<name>ATPL_SHIDS</name>
<comment type="function">
    <text evidence="1">F(1)F(0) ATP synthase produces ATP from ADP in the presence of a proton or sodium gradient. F-type ATPases consist of two structural domains, F(1) containing the extramembraneous catalytic core and F(0) containing the membrane proton channel, linked together by a central stalk and a peripheral stalk. During catalysis, ATP synthesis in the catalytic domain of F(1) is coupled via a rotary mechanism of the central stalk subunits to proton translocation.</text>
</comment>
<comment type="function">
    <text evidence="1">Key component of the F(0) channel; it plays a direct role in translocation across the membrane. A homomeric c-ring of between 10-14 subunits forms the central stalk rotor element with the F(1) delta and epsilon subunits.</text>
</comment>
<comment type="subunit">
    <text evidence="1">F-type ATPases have 2 components, F(1) - the catalytic core - and F(0) - the membrane proton channel. F(1) has five subunits: alpha(3), beta(3), gamma(1), delta(1), epsilon(1). F(0) has three main subunits: a(1), b(2) and c(10-14). The alpha and beta chains form an alternating ring which encloses part of the gamma chain. F(1) is attached to F(0) by a central stalk formed by the gamma and epsilon chains, while a peripheral stalk is formed by the delta and b chains.</text>
</comment>
<comment type="subcellular location">
    <subcellularLocation>
        <location evidence="1">Cell inner membrane</location>
        <topology evidence="1">Multi-pass membrane protein</topology>
    </subcellularLocation>
</comment>
<comment type="similarity">
    <text evidence="1">Belongs to the ATPase C chain family.</text>
</comment>
<proteinExistence type="inferred from homology"/>